<comment type="function">
    <text evidence="1 4 5 9 10">Required to control the activity of various transcription factors through their sequestration in the cytoplasm. Retains nuclear Zic proteins ZIC1, ZIC2 and ZIC3 in the cytoplasm and inhibits their transcriptional activation (PubMed:15207726, PubMed:15465018). Modulates the expression from cellular promoters. Binds to the axin complex, resulting in an increase in the level of free beta-catenin (By similarity). Affects axin-regulation of the WNT and JNK signaling pathways (By similarity). Involved in the development of lymphatic vessel valves (PubMed:35235341). Required to promote lymphatic endothelial cell migration, in a process that involves down-regulation of integrin beta 1 activation and control of cell adhesion to the extracellular matrix (By similarity). Regulates the activity of mechanosensitive Piezo channel (PubMed:37590348).</text>
</comment>
<comment type="subunit">
    <text evidence="1 4 5 8 9 10">Interacts with HAND1; the interaction sequesters Hand1 into the nucleolus and inhibits its activity (PubMed:17891141). Interacts (via C-terminus) with ZIC2 (PubMed:15207726, PubMed:15465018). Interacts (via C-terminus) with AXIN1, the histidine-rich region of CCNT1/cyclin-T and weakly with LEF1 (By similarity). Interacts with CCNT2 (By similarity). Interacts with GATA2 (PubMed:35235341). Interacts (via C-terminus) with Piezo channel composed of PIEZO1 or PIEZO2; the interaction prolongs Piezo channel inactivation (PubMed:37590348).</text>
</comment>
<comment type="subcellular location">
    <subcellularLocation>
        <location evidence="10">Cytoplasm</location>
    </subcellularLocation>
    <subcellularLocation>
        <location evidence="9">Secreted</location>
    </subcellularLocation>
</comment>
<comment type="alternative products">
    <event type="alternative splicing"/>
    <isoform>
        <id>Q8BX65-1</id>
        <name evidence="6 7">1</name>
        <sequence type="displayed"/>
    </isoform>
    <isoform>
        <id>Q8BX65-2</id>
        <name evidence="7">2</name>
        <sequence type="described" ref="VSP_052336 VSP_052337"/>
    </isoform>
</comment>
<comment type="tissue specificity">
    <text evidence="9">In the embryo, robust expression is detected between 16.5 and 18.5 dpc in lung, kidney, and salivary glands. In the developing cardiovascular system, it is detected in lymphatic and cardiac valves (at protein level).</text>
</comment>
<comment type="domain">
    <text evidence="1">The cysteine-rich C-terminus is involved in its granular distribution in the cytoplasm (By similarity). The cysteine-rich C-terminus mediates protein-protein interactions, including interaction with HIV-1 Tat, transcription factors, AXIN1, CCNT1 (By similarity).</text>
</comment>
<comment type="PTM">
    <text evidence="1">Palmitoylated.</text>
</comment>
<comment type="similarity">
    <text evidence="2">Belongs to the MDFI family.</text>
</comment>
<comment type="sequence caution" evidence="12">
    <conflict type="erroneous initiation">
        <sequence resource="EMBL-CDS" id="AAH67006"/>
    </conflict>
    <text>Extended N-terminus.</text>
</comment>
<comment type="sequence caution" evidence="12">
    <conflict type="erroneous initiation">
        <sequence resource="EMBL-CDS" id="BAC37840"/>
    </conflict>
    <text>Extended N-terminus.</text>
</comment>
<comment type="sequence caution" evidence="12">
    <conflict type="erroneous initiation">
        <sequence resource="EMBL-CDS" id="BAE43047"/>
    </conflict>
    <text>Extended N-terminus.</text>
</comment>
<proteinExistence type="evidence at protein level"/>
<name>MDFIC_MOUSE</name>
<feature type="chain" id="PRO_0000280223" description="MyoD family inhibitor domain-containing protein">
    <location>
        <begin position="1"/>
        <end position="247"/>
    </location>
</feature>
<feature type="domain" description="MDFI">
    <location>
        <begin position="74"/>
        <end position="247"/>
    </location>
</feature>
<feature type="region of interest" description="Disordered" evidence="3">
    <location>
        <begin position="1"/>
        <end position="67"/>
    </location>
</feature>
<feature type="region of interest" description="Disordered" evidence="3">
    <location>
        <begin position="80"/>
        <end position="110"/>
    </location>
</feature>
<feature type="modified residue" description="Phosphoserine" evidence="1">
    <location>
        <position position="129"/>
    </location>
</feature>
<feature type="modified residue" description="Phosphoserine" evidence="1">
    <location>
        <position position="141"/>
    </location>
</feature>
<feature type="splice variant" id="VSP_052336" description="In isoform 2." evidence="11">
    <location>
        <begin position="32"/>
        <end position="72"/>
    </location>
</feature>
<feature type="splice variant" id="VSP_052337" description="In isoform 2." evidence="11">
    <original>T</original>
    <variation>A</variation>
    <location>
        <position position="73"/>
    </location>
</feature>
<feature type="mutagenesis site" description="Binds Piezo1 but loses the ability to regulate Piezo channel activity." evidence="10">
    <original>C</original>
    <variation>A</variation>
    <variation>S</variation>
    <location>
        <position position="233"/>
    </location>
</feature>
<feature type="mutagenesis site" description="Binds Piezo1 but loses the ability to regulate Piezo channel activity." evidence="10">
    <original>C</original>
    <variation>A</variation>
    <variation>S</variation>
    <location>
        <position position="237"/>
    </location>
</feature>
<feature type="mutagenesis site" description="Binds Piezo1 but loses the ability to regulate Piezo channel activity." evidence="10">
    <original>C</original>
    <variation>A</variation>
    <variation>S</variation>
    <location>
        <position position="240"/>
    </location>
</feature>
<feature type="mutagenesis site" description="Binds Piezo1 but loses the ability to regulate Piezo channel activity." evidence="10">
    <original>C</original>
    <variation>A</variation>
    <variation>S</variation>
    <location>
        <position position="241"/>
    </location>
</feature>
<feature type="mutagenesis site" description="Binds Piezo1 but loses the ability to regulate Piezo channel activity." evidence="10">
    <original>C</original>
    <variation>A</variation>
    <variation>S</variation>
    <location>
        <position position="244"/>
    </location>
</feature>
<feature type="mutagenesis site" description="Does not affect protein expression and abundance. No effect on cell surface localization and secretion. No effect on interaction with GATA2." evidence="9">
    <original>F</original>
    <variation>L</variation>
    <location>
        <position position="245"/>
    </location>
</feature>
<dbReference type="EMBL" id="AK048821">
    <property type="protein sequence ID" value="BAC33469.1"/>
    <property type="molecule type" value="mRNA"/>
</dbReference>
<dbReference type="EMBL" id="AK080178">
    <property type="protein sequence ID" value="BAC37840.1"/>
    <property type="status" value="ALT_INIT"/>
    <property type="molecule type" value="mRNA"/>
</dbReference>
<dbReference type="EMBL" id="AK165016">
    <property type="protein sequence ID" value="BAE38001.1"/>
    <property type="molecule type" value="mRNA"/>
</dbReference>
<dbReference type="EMBL" id="AK172522">
    <property type="protein sequence ID" value="BAE43047.1"/>
    <property type="status" value="ALT_INIT"/>
    <property type="molecule type" value="mRNA"/>
</dbReference>
<dbReference type="EMBL" id="BC067006">
    <property type="protein sequence ID" value="AAH67006.1"/>
    <property type="status" value="ALT_INIT"/>
    <property type="molecule type" value="mRNA"/>
</dbReference>
<dbReference type="CCDS" id="CCDS19919.1">
    <molecule id="Q8BX65-1"/>
</dbReference>
<dbReference type="RefSeq" id="NP_780297.3">
    <molecule id="Q8BX65-1"/>
    <property type="nucleotide sequence ID" value="NM_175088.5"/>
</dbReference>
<dbReference type="PDB" id="8IMZ">
    <property type="method" value="EM"/>
    <property type="resolution" value="3.66 A"/>
    <property type="chains" value="D/E/F=1-247"/>
</dbReference>
<dbReference type="PDBsum" id="8IMZ"/>
<dbReference type="EMDB" id="EMD-35577"/>
<dbReference type="EMDB" id="EMD-36241"/>
<dbReference type="EMDB" id="EMD-36242"/>
<dbReference type="EMDB" id="EMD-36243"/>
<dbReference type="EMDB" id="EMD-36244"/>
<dbReference type="SMR" id="Q8BX65"/>
<dbReference type="BioGRID" id="200924">
    <property type="interactions" value="1"/>
</dbReference>
<dbReference type="FunCoup" id="Q8BX65">
    <property type="interactions" value="2201"/>
</dbReference>
<dbReference type="IntAct" id="Q8BX65">
    <property type="interactions" value="1"/>
</dbReference>
<dbReference type="STRING" id="10090.ENSMUSP00000140208"/>
<dbReference type="iPTMnet" id="Q8BX65"/>
<dbReference type="PhosphoSitePlus" id="Q8BX65"/>
<dbReference type="SwissPalm" id="Q8BX65"/>
<dbReference type="jPOST" id="Q8BX65"/>
<dbReference type="PaxDb" id="10090-ENSMUSP00000099186"/>
<dbReference type="ProteomicsDB" id="252758">
    <molecule id="Q8BX65-1"/>
</dbReference>
<dbReference type="ProteomicsDB" id="252759">
    <molecule id="Q8BX65-2"/>
</dbReference>
<dbReference type="Pumba" id="Q8BX65"/>
<dbReference type="Antibodypedia" id="31567">
    <property type="antibodies" value="149 antibodies from 24 providers"/>
</dbReference>
<dbReference type="DNASU" id="16543"/>
<dbReference type="Ensembl" id="ENSMUST00000101663.10">
    <molecule id="Q8BX65-1"/>
    <property type="protein sequence ID" value="ENSMUSP00000099186.4"/>
    <property type="gene ID" value="ENSMUSG00000041390.19"/>
</dbReference>
<dbReference type="Ensembl" id="ENSMUST00000120512.8">
    <molecule id="Q8BX65-1"/>
    <property type="protein sequence ID" value="ENSMUSP00000113050.2"/>
    <property type="gene ID" value="ENSMUSG00000041390.19"/>
</dbReference>
<dbReference type="Ensembl" id="ENSMUST00000189359.7">
    <molecule id="Q8BX65-1"/>
    <property type="protein sequence ID" value="ENSMUSP00000140208.2"/>
    <property type="gene ID" value="ENSMUSG00000041390.19"/>
</dbReference>
<dbReference type="GeneID" id="16543"/>
<dbReference type="KEGG" id="mmu:16543"/>
<dbReference type="UCSC" id="uc009azc.2">
    <molecule id="Q8BX65-1"/>
    <property type="organism name" value="mouse"/>
</dbReference>
<dbReference type="UCSC" id="uc012eif.1">
    <molecule id="Q8BX65-2"/>
    <property type="organism name" value="mouse"/>
</dbReference>
<dbReference type="AGR" id="MGI:104611"/>
<dbReference type="CTD" id="29969"/>
<dbReference type="MGI" id="MGI:104611">
    <property type="gene designation" value="Mdfic"/>
</dbReference>
<dbReference type="VEuPathDB" id="HostDB:ENSMUSG00000041390"/>
<dbReference type="eggNOG" id="ENOG502QSK8">
    <property type="taxonomic scope" value="Eukaryota"/>
</dbReference>
<dbReference type="GeneTree" id="ENSGT00940000158685"/>
<dbReference type="HOGENOM" id="CLU_067479_0_1_1"/>
<dbReference type="InParanoid" id="Q8BX65"/>
<dbReference type="OMA" id="CDQDNTE"/>
<dbReference type="OrthoDB" id="83046at9989"/>
<dbReference type="PhylomeDB" id="Q8BX65"/>
<dbReference type="TreeFam" id="TF332113"/>
<dbReference type="BioGRID-ORCS" id="16543">
    <property type="hits" value="3 hits in 77 CRISPR screens"/>
</dbReference>
<dbReference type="ChiTaRS" id="Mdfic">
    <property type="organism name" value="mouse"/>
</dbReference>
<dbReference type="PRO" id="PR:Q8BX65"/>
<dbReference type="Proteomes" id="UP000000589">
    <property type="component" value="Chromosome 6"/>
</dbReference>
<dbReference type="RNAct" id="Q8BX65">
    <property type="molecule type" value="protein"/>
</dbReference>
<dbReference type="Bgee" id="ENSMUSG00000041390">
    <property type="expression patterns" value="Expressed in choroid plexus epithelium and 227 other cell types or tissues"/>
</dbReference>
<dbReference type="ExpressionAtlas" id="Q8BX65">
    <property type="expression patterns" value="baseline and differential"/>
</dbReference>
<dbReference type="GO" id="GO:0005737">
    <property type="term" value="C:cytoplasm"/>
    <property type="evidence" value="ECO:0000314"/>
    <property type="project" value="UniProtKB"/>
</dbReference>
<dbReference type="GO" id="GO:0005576">
    <property type="term" value="C:extracellular region"/>
    <property type="evidence" value="ECO:0007669"/>
    <property type="project" value="UniProtKB-SubCell"/>
</dbReference>
<dbReference type="GO" id="GO:0005730">
    <property type="term" value="C:nucleolus"/>
    <property type="evidence" value="ECO:0000314"/>
    <property type="project" value="UniProtKB"/>
</dbReference>
<dbReference type="GO" id="GO:0005634">
    <property type="term" value="C:nucleus"/>
    <property type="evidence" value="ECO:0000314"/>
    <property type="project" value="UniProtKB"/>
</dbReference>
<dbReference type="GO" id="GO:0005886">
    <property type="term" value="C:plasma membrane"/>
    <property type="evidence" value="ECO:0007669"/>
    <property type="project" value="UniProtKB-SubCell"/>
</dbReference>
<dbReference type="GO" id="GO:0030332">
    <property type="term" value="F:cyclin binding"/>
    <property type="evidence" value="ECO:0000250"/>
    <property type="project" value="UniProtKB"/>
</dbReference>
<dbReference type="GO" id="GO:0140297">
    <property type="term" value="F:DNA-binding transcription factor binding"/>
    <property type="evidence" value="ECO:0000250"/>
    <property type="project" value="UniProtKB"/>
</dbReference>
<dbReference type="GO" id="GO:0030957">
    <property type="term" value="F:Tat protein binding"/>
    <property type="evidence" value="ECO:0000250"/>
    <property type="project" value="UniProtKB"/>
</dbReference>
<dbReference type="GO" id="GO:0045892">
    <property type="term" value="P:negative regulation of DNA-templated transcription"/>
    <property type="evidence" value="ECO:0000314"/>
    <property type="project" value="UniProtKB"/>
</dbReference>
<dbReference type="GO" id="GO:0042308">
    <property type="term" value="P:negative regulation of protein import into nucleus"/>
    <property type="evidence" value="ECO:0000314"/>
    <property type="project" value="UniProtKB"/>
</dbReference>
<dbReference type="GO" id="GO:0045893">
    <property type="term" value="P:positive regulation of DNA-templated transcription"/>
    <property type="evidence" value="ECO:0000250"/>
    <property type="project" value="UniProtKB"/>
</dbReference>
<dbReference type="GO" id="GO:0050434">
    <property type="term" value="P:positive regulation of viral transcription"/>
    <property type="evidence" value="ECO:0000250"/>
    <property type="project" value="UniProtKB"/>
</dbReference>
<dbReference type="GO" id="GO:0046328">
    <property type="term" value="P:regulation of JNK cascade"/>
    <property type="evidence" value="ECO:0007669"/>
    <property type="project" value="Ensembl"/>
</dbReference>
<dbReference type="GO" id="GO:0030111">
    <property type="term" value="P:regulation of Wnt signaling pathway"/>
    <property type="evidence" value="ECO:0007669"/>
    <property type="project" value="Ensembl"/>
</dbReference>
<dbReference type="InterPro" id="IPR026134">
    <property type="entry name" value="MDFI/MDFIC"/>
</dbReference>
<dbReference type="PANTHER" id="PTHR15304">
    <property type="entry name" value="MYOD FAMILY INHIBITOR"/>
    <property type="match status" value="1"/>
</dbReference>
<dbReference type="PANTHER" id="PTHR15304:SF0">
    <property type="entry name" value="MYOD FAMILY INHIBITOR DOMAIN-CONTAINING PROTEIN"/>
    <property type="match status" value="1"/>
</dbReference>
<dbReference type="Pfam" id="PF15316">
    <property type="entry name" value="MDFI"/>
    <property type="match status" value="1"/>
</dbReference>
<gene>
    <name evidence="14" type="primary">Mdfic</name>
    <name evidence="14" type="synonym">Kdt1</name>
</gene>
<reference key="1">
    <citation type="journal article" date="2005" name="Science">
        <title>The transcriptional landscape of the mammalian genome.</title>
        <authorList>
            <person name="Carninci P."/>
            <person name="Kasukawa T."/>
            <person name="Katayama S."/>
            <person name="Gough J."/>
            <person name="Frith M.C."/>
            <person name="Maeda N."/>
            <person name="Oyama R."/>
            <person name="Ravasi T."/>
            <person name="Lenhard B."/>
            <person name="Wells C."/>
            <person name="Kodzius R."/>
            <person name="Shimokawa K."/>
            <person name="Bajic V.B."/>
            <person name="Brenner S.E."/>
            <person name="Batalov S."/>
            <person name="Forrest A.R."/>
            <person name="Zavolan M."/>
            <person name="Davis M.J."/>
            <person name="Wilming L.G."/>
            <person name="Aidinis V."/>
            <person name="Allen J.E."/>
            <person name="Ambesi-Impiombato A."/>
            <person name="Apweiler R."/>
            <person name="Aturaliya R.N."/>
            <person name="Bailey T.L."/>
            <person name="Bansal M."/>
            <person name="Baxter L."/>
            <person name="Beisel K.W."/>
            <person name="Bersano T."/>
            <person name="Bono H."/>
            <person name="Chalk A.M."/>
            <person name="Chiu K.P."/>
            <person name="Choudhary V."/>
            <person name="Christoffels A."/>
            <person name="Clutterbuck D.R."/>
            <person name="Crowe M.L."/>
            <person name="Dalla E."/>
            <person name="Dalrymple B.P."/>
            <person name="de Bono B."/>
            <person name="Della Gatta G."/>
            <person name="di Bernardo D."/>
            <person name="Down T."/>
            <person name="Engstrom P."/>
            <person name="Fagiolini M."/>
            <person name="Faulkner G."/>
            <person name="Fletcher C.F."/>
            <person name="Fukushima T."/>
            <person name="Furuno M."/>
            <person name="Futaki S."/>
            <person name="Gariboldi M."/>
            <person name="Georgii-Hemming P."/>
            <person name="Gingeras T.R."/>
            <person name="Gojobori T."/>
            <person name="Green R.E."/>
            <person name="Gustincich S."/>
            <person name="Harbers M."/>
            <person name="Hayashi Y."/>
            <person name="Hensch T.K."/>
            <person name="Hirokawa N."/>
            <person name="Hill D."/>
            <person name="Huminiecki L."/>
            <person name="Iacono M."/>
            <person name="Ikeo K."/>
            <person name="Iwama A."/>
            <person name="Ishikawa T."/>
            <person name="Jakt M."/>
            <person name="Kanapin A."/>
            <person name="Katoh M."/>
            <person name="Kawasawa Y."/>
            <person name="Kelso J."/>
            <person name="Kitamura H."/>
            <person name="Kitano H."/>
            <person name="Kollias G."/>
            <person name="Krishnan S.P."/>
            <person name="Kruger A."/>
            <person name="Kummerfeld S.K."/>
            <person name="Kurochkin I.V."/>
            <person name="Lareau L.F."/>
            <person name="Lazarevic D."/>
            <person name="Lipovich L."/>
            <person name="Liu J."/>
            <person name="Liuni S."/>
            <person name="McWilliam S."/>
            <person name="Madan Babu M."/>
            <person name="Madera M."/>
            <person name="Marchionni L."/>
            <person name="Matsuda H."/>
            <person name="Matsuzawa S."/>
            <person name="Miki H."/>
            <person name="Mignone F."/>
            <person name="Miyake S."/>
            <person name="Morris K."/>
            <person name="Mottagui-Tabar S."/>
            <person name="Mulder N."/>
            <person name="Nakano N."/>
            <person name="Nakauchi H."/>
            <person name="Ng P."/>
            <person name="Nilsson R."/>
            <person name="Nishiguchi S."/>
            <person name="Nishikawa S."/>
            <person name="Nori F."/>
            <person name="Ohara O."/>
            <person name="Okazaki Y."/>
            <person name="Orlando V."/>
            <person name="Pang K.C."/>
            <person name="Pavan W.J."/>
            <person name="Pavesi G."/>
            <person name="Pesole G."/>
            <person name="Petrovsky N."/>
            <person name="Piazza S."/>
            <person name="Reed J."/>
            <person name="Reid J.F."/>
            <person name="Ring B.Z."/>
            <person name="Ringwald M."/>
            <person name="Rost B."/>
            <person name="Ruan Y."/>
            <person name="Salzberg S.L."/>
            <person name="Sandelin A."/>
            <person name="Schneider C."/>
            <person name="Schoenbach C."/>
            <person name="Sekiguchi K."/>
            <person name="Semple C.A."/>
            <person name="Seno S."/>
            <person name="Sessa L."/>
            <person name="Sheng Y."/>
            <person name="Shibata Y."/>
            <person name="Shimada H."/>
            <person name="Shimada K."/>
            <person name="Silva D."/>
            <person name="Sinclair B."/>
            <person name="Sperling S."/>
            <person name="Stupka E."/>
            <person name="Sugiura K."/>
            <person name="Sultana R."/>
            <person name="Takenaka Y."/>
            <person name="Taki K."/>
            <person name="Tammoja K."/>
            <person name="Tan S.L."/>
            <person name="Tang S."/>
            <person name="Taylor M.S."/>
            <person name="Tegner J."/>
            <person name="Teichmann S.A."/>
            <person name="Ueda H.R."/>
            <person name="van Nimwegen E."/>
            <person name="Verardo R."/>
            <person name="Wei C.L."/>
            <person name="Yagi K."/>
            <person name="Yamanishi H."/>
            <person name="Zabarovsky E."/>
            <person name="Zhu S."/>
            <person name="Zimmer A."/>
            <person name="Hide W."/>
            <person name="Bult C."/>
            <person name="Grimmond S.M."/>
            <person name="Teasdale R.D."/>
            <person name="Liu E.T."/>
            <person name="Brusic V."/>
            <person name="Quackenbush J."/>
            <person name="Wahlestedt C."/>
            <person name="Mattick J.S."/>
            <person name="Hume D.A."/>
            <person name="Kai C."/>
            <person name="Sasaki D."/>
            <person name="Tomaru Y."/>
            <person name="Fukuda S."/>
            <person name="Kanamori-Katayama M."/>
            <person name="Suzuki M."/>
            <person name="Aoki J."/>
            <person name="Arakawa T."/>
            <person name="Iida J."/>
            <person name="Imamura K."/>
            <person name="Itoh M."/>
            <person name="Kato T."/>
            <person name="Kawaji H."/>
            <person name="Kawagashira N."/>
            <person name="Kawashima T."/>
            <person name="Kojima M."/>
            <person name="Kondo S."/>
            <person name="Konno H."/>
            <person name="Nakano K."/>
            <person name="Ninomiya N."/>
            <person name="Nishio T."/>
            <person name="Okada M."/>
            <person name="Plessy C."/>
            <person name="Shibata K."/>
            <person name="Shiraki T."/>
            <person name="Suzuki S."/>
            <person name="Tagami M."/>
            <person name="Waki K."/>
            <person name="Watahiki A."/>
            <person name="Okamura-Oho Y."/>
            <person name="Suzuki H."/>
            <person name="Kawai J."/>
            <person name="Hayashizaki Y."/>
        </authorList>
    </citation>
    <scope>NUCLEOTIDE SEQUENCE [LARGE SCALE MRNA] (ISOFORMS 1 AND 2)</scope>
    <source>
        <strain>C57BL/6J</strain>
        <strain>NOD</strain>
        <tissue>Aorta</tissue>
        <tissue>Cerebellum</tissue>
        <tissue>Eye</tissue>
        <tissue>Spleen</tissue>
        <tissue>Vein</tissue>
    </source>
</reference>
<reference evidence="12 13" key="2">
    <citation type="journal article" date="2004" name="Genome Res.">
        <title>The status, quality, and expansion of the NIH full-length cDNA project: the Mammalian Gene Collection (MGC).</title>
        <authorList>
            <consortium name="The MGC Project Team"/>
        </authorList>
    </citation>
    <scope>NUCLEOTIDE SEQUENCE [LARGE SCALE MRNA] (ISOFORM 1)</scope>
    <source>
        <strain evidence="13">C57BL/6J</strain>
        <tissue evidence="13">Brain</tissue>
    </source>
</reference>
<reference key="3">
    <citation type="journal article" date="2004" name="Biochem. Biophys. Res. Commun.">
        <title>Myogenic repressor I-mfa interferes with the function of Zic family proteins.</title>
        <authorList>
            <person name="Mizugishi K."/>
            <person name="Hatayama M."/>
            <person name="Tohmonda T."/>
            <person name="Ogawa M."/>
            <person name="Inoue T."/>
            <person name="Mikoshiba K."/>
            <person name="Aruga J."/>
        </authorList>
    </citation>
    <scope>FUNCTION</scope>
    <scope>INTERACTION WITH ZIC2</scope>
    <scope>SUBCELLULAR LOCATION</scope>
</reference>
<reference key="4">
    <citation type="journal article" date="2004" name="Biochem. Biophys. Res. Commun.">
        <title>Molecular properties of Zic4 and Zic5 proteins: functional diversity within Zic family.</title>
        <authorList>
            <person name="Ishiguro A."/>
            <person name="Inoue T."/>
            <person name="Mikoshiba K."/>
            <person name="Aruga J."/>
        </authorList>
    </citation>
    <scope>FUNCTION</scope>
    <scope>INTERACTION WITH ZIC2</scope>
    <scope>SUBCELLULAR LOCATION</scope>
</reference>
<reference key="5">
    <citation type="journal article" date="2007" name="Nat. Cell Biol.">
        <title>Nucleolar release of Hand1 acts as a molecular switch to determine cell fate.</title>
        <authorList>
            <person name="Martindill D.M.J."/>
            <person name="Risebro C.A."/>
            <person name="Smart N."/>
            <person name="Franco-Viseras Mdel M."/>
            <person name="Rosario C.O."/>
            <person name="Swallow C.J."/>
            <person name="Dennis J.W."/>
            <person name="Riley P.R."/>
        </authorList>
    </citation>
    <scope>SUBCELLULAR LOCATION</scope>
    <scope>INTERACTION WITH HAND1</scope>
</reference>
<reference key="6">
    <citation type="journal article" date="2022" name="Sci. Transl. Med.">
        <title>Pathogenic variants in MDFIC cause recessive central conducting lymphatic anomaly with lymphedema.</title>
        <authorList>
            <person name="Byrne A.B."/>
            <person name="Brouillard P."/>
            <person name="Sutton D.L."/>
            <person name="Kazenwadel J."/>
            <person name="Montazaribarforoushi S."/>
            <person name="Secker G.A."/>
            <person name="Oszmiana A."/>
            <person name="Babic M."/>
            <person name="Betterman K.L."/>
            <person name="Brautigan P.J."/>
            <person name="White M."/>
            <person name="Piltz S.G."/>
            <person name="Thomas P.Q."/>
            <person name="Hahn C.N."/>
            <person name="Rath M."/>
            <person name="Felbor U."/>
            <person name="Korenke G.C."/>
            <person name="Smith C.L."/>
            <person name="Wood K.H."/>
            <person name="Sheppard S.E."/>
            <person name="Adams D.M."/>
            <person name="Kariminejad A."/>
            <person name="Helaers R."/>
            <person name="Boon L.M."/>
            <person name="Revencu N."/>
            <person name="Moore L."/>
            <person name="Barnett C."/>
            <person name="Haan E."/>
            <person name="Arts P."/>
            <person name="Vikkula M."/>
            <person name="Scott H.S."/>
            <person name="Harvey N.L."/>
        </authorList>
    </citation>
    <scope>FUNCTION</scope>
    <scope>TISSUE SPECIFICITY</scope>
    <scope>SUBCELLULAR LOCATION</scope>
    <scope>INTERACTION WITH GATA2</scope>
    <scope>MUTAGENESIS OF PHE-245</scope>
</reference>
<reference evidence="15" key="7">
    <citation type="journal article" date="2023" name="Science">
        <title>MyoD-family inhibitor proteins act as auxiliary subunits of Piezo channels.</title>
        <authorList>
            <person name="Zhou Z."/>
            <person name="Ma X."/>
            <person name="Lin Y."/>
            <person name="Cheng D."/>
            <person name="Bavi N."/>
            <person name="Secker G.A."/>
            <person name="Li J.V."/>
            <person name="Janbandhu V."/>
            <person name="Sutton D.L."/>
            <person name="Scott H.S."/>
            <person name="Yao M."/>
            <person name="Harvey R.P."/>
            <person name="Harvey N.L."/>
            <person name="Corry B."/>
            <person name="Zhang Y."/>
            <person name="Cox C.D."/>
        </authorList>
    </citation>
    <scope>STRUCTURE BY ELECTRON MICROSCOPY (3.66 ANGSTROMS) IN COMPLEX WITH PIEZO1</scope>
    <scope>FUNCTION</scope>
    <scope>INTERACTION WITH PIEZO1 AND PIEZO2</scope>
    <scope>SUBCELLULAR LOCATION</scope>
    <scope>MUTAGENESIS OF CYS-233; CYS-237; CYS-240; CYS-241 AND CYS-244</scope>
</reference>
<protein>
    <recommendedName>
        <fullName>MyoD family inhibitor domain-containing protein</fullName>
    </recommendedName>
    <alternativeName>
        <fullName>I-mfa domain-containing protein</fullName>
    </alternativeName>
    <alternativeName>
        <fullName>Kidney cell line-derived transcript 1</fullName>
    </alternativeName>
</protein>
<sequence length="247" mass="26094">MSCAGEALAPGPAEQQCPVEAGGGRLGSPAHEACNEDNTEKDKRPATSGHTRCGLMRDQSIWPNPSAGELVRTQPERLPQLQTSAQEPGKEETGKIKNGGHTRMSNGNGIPHGAKHVSVENHKISAPVSQKMHRKIQSSLSVNNDISKKSKVNAVFSPKAASSPEDCCVHCILACLFCEFLTLCNIVLGQASCGICTSEACCCCCGDEMGDDCSCPCDMDCGIMDACCESSDCLEICMECCGICFPS</sequence>
<organism>
    <name type="scientific">Mus musculus</name>
    <name type="common">Mouse</name>
    <dbReference type="NCBI Taxonomy" id="10090"/>
    <lineage>
        <taxon>Eukaryota</taxon>
        <taxon>Metazoa</taxon>
        <taxon>Chordata</taxon>
        <taxon>Craniata</taxon>
        <taxon>Vertebrata</taxon>
        <taxon>Euteleostomi</taxon>
        <taxon>Mammalia</taxon>
        <taxon>Eutheria</taxon>
        <taxon>Euarchontoglires</taxon>
        <taxon>Glires</taxon>
        <taxon>Rodentia</taxon>
        <taxon>Myomorpha</taxon>
        <taxon>Muroidea</taxon>
        <taxon>Muridae</taxon>
        <taxon>Murinae</taxon>
        <taxon>Mus</taxon>
        <taxon>Mus</taxon>
    </lineage>
</organism>
<accession>Q8BX65</accession>
<accession>Q3T9H3</accession>
<accession>Q6NXM1</accession>
<accession>Q8BJS3</accession>
<keyword id="KW-0002">3D-structure</keyword>
<keyword id="KW-0025">Alternative splicing</keyword>
<keyword id="KW-0963">Cytoplasm</keyword>
<keyword id="KW-0597">Phosphoprotein</keyword>
<keyword id="KW-1185">Reference proteome</keyword>
<keyword id="KW-0964">Secreted</keyword>
<keyword id="KW-0804">Transcription</keyword>
<keyword id="KW-0805">Transcription regulation</keyword>
<evidence type="ECO:0000250" key="1">
    <source>
        <dbReference type="UniProtKB" id="Q9P1T7"/>
    </source>
</evidence>
<evidence type="ECO:0000255" key="2"/>
<evidence type="ECO:0000256" key="3">
    <source>
        <dbReference type="SAM" id="MobiDB-lite"/>
    </source>
</evidence>
<evidence type="ECO:0000269" key="4">
    <source>
    </source>
</evidence>
<evidence type="ECO:0000269" key="5">
    <source>
    </source>
</evidence>
<evidence type="ECO:0000269" key="6">
    <source>
    </source>
</evidence>
<evidence type="ECO:0000269" key="7">
    <source>
    </source>
</evidence>
<evidence type="ECO:0000269" key="8">
    <source>
    </source>
</evidence>
<evidence type="ECO:0000269" key="9">
    <source>
    </source>
</evidence>
<evidence type="ECO:0000269" key="10">
    <source>
    </source>
</evidence>
<evidence type="ECO:0000303" key="11">
    <source>
    </source>
</evidence>
<evidence type="ECO:0000305" key="12"/>
<evidence type="ECO:0000312" key="13">
    <source>
        <dbReference type="EMBL" id="AAH67006.1"/>
    </source>
</evidence>
<evidence type="ECO:0000312" key="14">
    <source>
        <dbReference type="MGI" id="MGI:104611"/>
    </source>
</evidence>
<evidence type="ECO:0007744" key="15">
    <source>
        <dbReference type="PDB" id="8IMZ"/>
    </source>
</evidence>